<proteinExistence type="evidence at protein level"/>
<protein>
    <recommendedName>
        <fullName>Calcitonin-2</fullName>
    </recommendedName>
</protein>
<comment type="function">
    <text>Causes a rapid but short-lived drop in the level of calcium and phosphate in blood by promoting the incorporation of those ions in the bones.</text>
</comment>
<comment type="subcellular location">
    <subcellularLocation>
        <location>Secreted</location>
    </subcellularLocation>
</comment>
<comment type="similarity">
    <text evidence="2">Belongs to the calcitonin family.</text>
</comment>
<reference key="1">
    <citation type="book" date="1972" name="Endocrinology 1971: proceedings of the third international symposium">
        <title>Chemistry and physiology of the calcitonins: some recent advances.</title>
        <editorList>
            <person name="Taylor S."/>
        </editorList>
        <authorList>
            <person name="Keutmann H.T."/>
            <person name="Lequin R.M."/>
            <person name="Habener J.F."/>
            <person name="Singer F.R."/>
            <person name="Niall H.D."/>
            <person name="Potts J.T. Jr."/>
        </authorList>
    </citation>
    <scope>PRELIMINARY PROTEIN SEQUENCE</scope>
</reference>
<reference key="2">
    <citation type="journal article" date="1972" name="Nature New Biol.">
        <title>Synthesis of two natural salmon calcitonins.</title>
        <authorList>
            <person name="Pless J."/>
            <person name="Bauer W."/>
            <person name="Bossert H."/>
            <person name="Zehnder K."/>
            <person name="Guttmann S."/>
        </authorList>
    </citation>
    <scope>SYNTHESIS</scope>
    <scope>AMIDATION AT PRO-32</scope>
</reference>
<feature type="peptide" id="PRO_0000044670" description="Calcitonin-2">
    <location>
        <begin position="1"/>
        <end position="32"/>
    </location>
</feature>
<feature type="modified residue" description="Proline amide" evidence="1">
    <location>
        <position position="32"/>
    </location>
</feature>
<feature type="disulfide bond">
    <location>
        <begin position="1"/>
        <end position="7"/>
    </location>
</feature>
<accession>P69165</accession>
<accession>P01264</accession>
<evidence type="ECO:0000269" key="1">
    <source>
    </source>
</evidence>
<evidence type="ECO:0000305" key="2"/>
<keyword id="KW-0027">Amidation</keyword>
<keyword id="KW-0903">Direct protein sequencing</keyword>
<keyword id="KW-1015">Disulfide bond</keyword>
<keyword id="KW-0372">Hormone</keyword>
<keyword id="KW-0964">Secreted</keyword>
<dbReference type="PIR" id="D01531">
    <property type="entry name" value="TCON2P"/>
</dbReference>
<dbReference type="SMR" id="P69165"/>
<dbReference type="GO" id="GO:0005576">
    <property type="term" value="C:extracellular region"/>
    <property type="evidence" value="ECO:0007669"/>
    <property type="project" value="UniProtKB-SubCell"/>
</dbReference>
<dbReference type="GO" id="GO:0005179">
    <property type="term" value="F:hormone activity"/>
    <property type="evidence" value="ECO:0007669"/>
    <property type="project" value="UniProtKB-KW"/>
</dbReference>
<dbReference type="InterPro" id="IPR021118">
    <property type="entry name" value="Calcitonin"/>
</dbReference>
<dbReference type="InterPro" id="IPR021116">
    <property type="entry name" value="Calcitonin/adrenomedullin"/>
</dbReference>
<dbReference type="InterPro" id="IPR018360">
    <property type="entry name" value="Calcitonin_CS"/>
</dbReference>
<dbReference type="InterPro" id="IPR001693">
    <property type="entry name" value="Calcitonin_peptide-like"/>
</dbReference>
<dbReference type="Pfam" id="PF00214">
    <property type="entry name" value="Calc_CGRP_IAPP"/>
    <property type="match status" value="1"/>
</dbReference>
<dbReference type="PRINTS" id="PR00270">
    <property type="entry name" value="CALCITONINA"/>
</dbReference>
<dbReference type="SMART" id="SM00113">
    <property type="entry name" value="CALCITONIN"/>
    <property type="match status" value="1"/>
</dbReference>
<dbReference type="PROSITE" id="PS00258">
    <property type="entry name" value="CALCITONIN"/>
    <property type="match status" value="1"/>
</dbReference>
<name>CALC2_ONCGO</name>
<sequence>CSNLSTCVLGKLSQDLHKLQTFPRTNTGAGVP</sequence>
<organism>
    <name type="scientific">Oncorhynchus gorbuscha</name>
    <name type="common">Pink salmon</name>
    <name type="synonym">Salmo gorbuscha</name>
    <dbReference type="NCBI Taxonomy" id="8017"/>
    <lineage>
        <taxon>Eukaryota</taxon>
        <taxon>Metazoa</taxon>
        <taxon>Chordata</taxon>
        <taxon>Craniata</taxon>
        <taxon>Vertebrata</taxon>
        <taxon>Euteleostomi</taxon>
        <taxon>Actinopterygii</taxon>
        <taxon>Neopterygii</taxon>
        <taxon>Teleostei</taxon>
        <taxon>Protacanthopterygii</taxon>
        <taxon>Salmoniformes</taxon>
        <taxon>Salmonidae</taxon>
        <taxon>Salmoninae</taxon>
        <taxon>Oncorhynchus</taxon>
    </lineage>
</organism>